<keyword id="KW-0963">Cytoplasm</keyword>
<comment type="function">
    <text evidence="1">Required for resistance to DNA-damaging agents.</text>
</comment>
<comment type="subunit">
    <text evidence="1">Homodimer.</text>
</comment>
<comment type="subcellular location">
    <subcellularLocation>
        <location evidence="1">Cytoplasm</location>
    </subcellularLocation>
</comment>
<comment type="similarity">
    <text evidence="2">Belongs to the universal stress protein A family.</text>
</comment>
<feature type="initiator methionine" description="Removed" evidence="1">
    <location>
        <position position="1"/>
    </location>
</feature>
<feature type="chain" id="PRO_0000147403" description="Universal stress protein A">
    <location>
        <begin position="2"/>
        <end position="144"/>
    </location>
</feature>
<protein>
    <recommendedName>
        <fullName>Universal stress protein A</fullName>
    </recommendedName>
</protein>
<proteinExistence type="inferred from homology"/>
<gene>
    <name type="primary">uspA</name>
    <name type="ordered locus">STY4212</name>
    <name type="ordered locus">t3925</name>
</gene>
<accession>Q8Z268</accession>
<sequence length="144" mass="16079">MAYKHILIAVDLSPESKVLVEKAVSMARPYNAKISLIHVDVNYSDLYTGLIDVNLGDMQKRISKETHHALTELSTNAGYPITETLSGSGDLGQVLVDAIKKYDMDLVVCGHHQDFWSKLMSSARQLINTVHVDMLIVPLRDEEE</sequence>
<dbReference type="EMBL" id="AL513382">
    <property type="protein sequence ID" value="CAD08033.1"/>
    <property type="molecule type" value="Genomic_DNA"/>
</dbReference>
<dbReference type="EMBL" id="AE014613">
    <property type="protein sequence ID" value="AAO71398.1"/>
    <property type="molecule type" value="Genomic_DNA"/>
</dbReference>
<dbReference type="RefSeq" id="NP_458326.1">
    <property type="nucleotide sequence ID" value="NC_003198.1"/>
</dbReference>
<dbReference type="RefSeq" id="WP_000323566.1">
    <property type="nucleotide sequence ID" value="NZ_WSUR01000001.1"/>
</dbReference>
<dbReference type="SMR" id="Q8Z268"/>
<dbReference type="STRING" id="220341.gene:17588046"/>
<dbReference type="KEGG" id="stt:t3925"/>
<dbReference type="KEGG" id="sty:STY4212"/>
<dbReference type="PATRIC" id="fig|220341.7.peg.4301"/>
<dbReference type="eggNOG" id="COG0589">
    <property type="taxonomic scope" value="Bacteria"/>
</dbReference>
<dbReference type="HOGENOM" id="CLU_049301_18_0_6"/>
<dbReference type="OMA" id="MNTVPCD"/>
<dbReference type="OrthoDB" id="9792500at2"/>
<dbReference type="Proteomes" id="UP000000541">
    <property type="component" value="Chromosome"/>
</dbReference>
<dbReference type="Proteomes" id="UP000002670">
    <property type="component" value="Chromosome"/>
</dbReference>
<dbReference type="GO" id="GO:0005737">
    <property type="term" value="C:cytoplasm"/>
    <property type="evidence" value="ECO:0007669"/>
    <property type="project" value="UniProtKB-SubCell"/>
</dbReference>
<dbReference type="CDD" id="cd23657">
    <property type="entry name" value="USP-A-like"/>
    <property type="match status" value="1"/>
</dbReference>
<dbReference type="FunFam" id="3.40.50.620:FF:000014">
    <property type="entry name" value="Universal stress protein"/>
    <property type="match status" value="1"/>
</dbReference>
<dbReference type="Gene3D" id="3.40.50.620">
    <property type="entry name" value="HUPs"/>
    <property type="match status" value="1"/>
</dbReference>
<dbReference type="InterPro" id="IPR014729">
    <property type="entry name" value="Rossmann-like_a/b/a_fold"/>
</dbReference>
<dbReference type="InterPro" id="IPR006015">
    <property type="entry name" value="Universal_stress_UspA"/>
</dbReference>
<dbReference type="InterPro" id="IPR006016">
    <property type="entry name" value="UspA"/>
</dbReference>
<dbReference type="NCBIfam" id="NF011698">
    <property type="entry name" value="PRK15118.1"/>
    <property type="match status" value="1"/>
</dbReference>
<dbReference type="PANTHER" id="PTHR46268">
    <property type="entry name" value="STRESS RESPONSE PROTEIN NHAX"/>
    <property type="match status" value="1"/>
</dbReference>
<dbReference type="PANTHER" id="PTHR46268:SF23">
    <property type="entry name" value="UNIVERSAL STRESS PROTEIN A-RELATED"/>
    <property type="match status" value="1"/>
</dbReference>
<dbReference type="Pfam" id="PF00582">
    <property type="entry name" value="Usp"/>
    <property type="match status" value="1"/>
</dbReference>
<dbReference type="PIRSF" id="PIRSF006276">
    <property type="entry name" value="UspA"/>
    <property type="match status" value="1"/>
</dbReference>
<dbReference type="SUPFAM" id="SSF52402">
    <property type="entry name" value="Adenine nucleotide alpha hydrolases-like"/>
    <property type="match status" value="1"/>
</dbReference>
<name>USPA_SALTI</name>
<reference key="1">
    <citation type="journal article" date="2001" name="Nature">
        <title>Complete genome sequence of a multiple drug resistant Salmonella enterica serovar Typhi CT18.</title>
        <authorList>
            <person name="Parkhill J."/>
            <person name="Dougan G."/>
            <person name="James K.D."/>
            <person name="Thomson N.R."/>
            <person name="Pickard D."/>
            <person name="Wain J."/>
            <person name="Churcher C.M."/>
            <person name="Mungall K.L."/>
            <person name="Bentley S.D."/>
            <person name="Holden M.T.G."/>
            <person name="Sebaihia M."/>
            <person name="Baker S."/>
            <person name="Basham D."/>
            <person name="Brooks K."/>
            <person name="Chillingworth T."/>
            <person name="Connerton P."/>
            <person name="Cronin A."/>
            <person name="Davis P."/>
            <person name="Davies R.M."/>
            <person name="Dowd L."/>
            <person name="White N."/>
            <person name="Farrar J."/>
            <person name="Feltwell T."/>
            <person name="Hamlin N."/>
            <person name="Haque A."/>
            <person name="Hien T.T."/>
            <person name="Holroyd S."/>
            <person name="Jagels K."/>
            <person name="Krogh A."/>
            <person name="Larsen T.S."/>
            <person name="Leather S."/>
            <person name="Moule S."/>
            <person name="O'Gaora P."/>
            <person name="Parry C."/>
            <person name="Quail M.A."/>
            <person name="Rutherford K.M."/>
            <person name="Simmonds M."/>
            <person name="Skelton J."/>
            <person name="Stevens K."/>
            <person name="Whitehead S."/>
            <person name="Barrell B.G."/>
        </authorList>
    </citation>
    <scope>NUCLEOTIDE SEQUENCE [LARGE SCALE GENOMIC DNA]</scope>
    <source>
        <strain>CT18</strain>
    </source>
</reference>
<reference key="2">
    <citation type="journal article" date="2003" name="J. Bacteriol.">
        <title>Comparative genomics of Salmonella enterica serovar Typhi strains Ty2 and CT18.</title>
        <authorList>
            <person name="Deng W."/>
            <person name="Liou S.-R."/>
            <person name="Plunkett G. III"/>
            <person name="Mayhew G.F."/>
            <person name="Rose D.J."/>
            <person name="Burland V."/>
            <person name="Kodoyianni V."/>
            <person name="Schwartz D.C."/>
            <person name="Blattner F.R."/>
        </authorList>
    </citation>
    <scope>NUCLEOTIDE SEQUENCE [LARGE SCALE GENOMIC DNA]</scope>
    <source>
        <strain>ATCC 700931 / Ty2</strain>
    </source>
</reference>
<organism>
    <name type="scientific">Salmonella typhi</name>
    <dbReference type="NCBI Taxonomy" id="90370"/>
    <lineage>
        <taxon>Bacteria</taxon>
        <taxon>Pseudomonadati</taxon>
        <taxon>Pseudomonadota</taxon>
        <taxon>Gammaproteobacteria</taxon>
        <taxon>Enterobacterales</taxon>
        <taxon>Enterobacteriaceae</taxon>
        <taxon>Salmonella</taxon>
    </lineage>
</organism>
<evidence type="ECO:0000250" key="1"/>
<evidence type="ECO:0000305" key="2"/>